<name>114L_IIV3</name>
<feature type="signal peptide" evidence="1">
    <location>
        <begin position="1"/>
        <end position="20"/>
    </location>
</feature>
<feature type="chain" id="PRO_0000377814" description="Uncharacterized protein 114L">
    <location>
        <begin position="21"/>
        <end position="145"/>
    </location>
</feature>
<reference key="1">
    <citation type="journal article" date="2006" name="J. Virol.">
        <title>Genome of invertebrate iridescent virus type 3 (mosquito iridescent virus).</title>
        <authorList>
            <person name="Delhon G."/>
            <person name="Tulman E.R."/>
            <person name="Afonso C.L."/>
            <person name="Lu Z."/>
            <person name="Becnel J.J."/>
            <person name="Moser B.A."/>
            <person name="Kutish G.F."/>
            <person name="Rock D.L."/>
        </authorList>
    </citation>
    <scope>NUCLEOTIDE SEQUENCE [LARGE SCALE GENOMIC DNA]</scope>
</reference>
<organismHost>
    <name type="scientific">Aedes vexans</name>
    <name type="common">Inland floodwater mosquito</name>
    <name type="synonym">Culex vexans</name>
    <dbReference type="NCBI Taxonomy" id="7163"/>
</organismHost>
<organismHost>
    <name type="scientific">Culex territans</name>
    <dbReference type="NCBI Taxonomy" id="42431"/>
</organismHost>
<organismHost>
    <name type="scientific">Culiseta annulata</name>
    <dbReference type="NCBI Taxonomy" id="332058"/>
</organismHost>
<organismHost>
    <name type="scientific">Ochlerotatus sollicitans</name>
    <name type="common">eastern saltmarsh mosquito</name>
    <dbReference type="NCBI Taxonomy" id="310513"/>
</organismHost>
<organismHost>
    <name type="scientific">Ochlerotatus taeniorhynchus</name>
    <name type="common">Black salt marsh mosquito</name>
    <name type="synonym">Aedes taeniorhynchus</name>
    <dbReference type="NCBI Taxonomy" id="329105"/>
</organismHost>
<organismHost>
    <name type="scientific">Psorophora ferox</name>
    <dbReference type="NCBI Taxonomy" id="7183"/>
</organismHost>
<gene>
    <name type="ORF">IIV3-114L</name>
</gene>
<sequence length="145" mass="16074">MKTCTVICCTALVLGLTAYAQKECVAVSSQLAQIIGHLPNKSPLSAFTRRDLIRAFKMAQESGHHLAGEKPRTFTEKMNHQMVLTYLKRYNYLAGGHITPETVKRAVLKLQHNSGVLEQTGVIDVPTINFVKTHPRGHVEPLPSQ</sequence>
<protein>
    <recommendedName>
        <fullName>Uncharacterized protein 114L</fullName>
    </recommendedName>
</protein>
<dbReference type="EMBL" id="DQ643392">
    <property type="protein sequence ID" value="ABF82144.1"/>
    <property type="molecule type" value="Genomic_DNA"/>
</dbReference>
<dbReference type="RefSeq" id="YP_654686.1">
    <property type="nucleotide sequence ID" value="NC_008187.1"/>
</dbReference>
<dbReference type="KEGG" id="vg:4156325"/>
<dbReference type="Proteomes" id="UP000001358">
    <property type="component" value="Genome"/>
</dbReference>
<dbReference type="Gene3D" id="1.10.101.10">
    <property type="entry name" value="PGBD-like superfamily/PGBD"/>
    <property type="match status" value="1"/>
</dbReference>
<dbReference type="InterPro" id="IPR036365">
    <property type="entry name" value="PGBD-like_sf"/>
</dbReference>
<dbReference type="InterPro" id="IPR036366">
    <property type="entry name" value="PGBDSf"/>
</dbReference>
<dbReference type="SUPFAM" id="SSF47090">
    <property type="entry name" value="PGBD-like"/>
    <property type="match status" value="1"/>
</dbReference>
<accession>Q196U6</accession>
<proteinExistence type="inferred from homology"/>
<keyword id="KW-1185">Reference proteome</keyword>
<keyword id="KW-0732">Signal</keyword>
<organism>
    <name type="scientific">Invertebrate iridescent virus 3</name>
    <name type="common">IIV-3</name>
    <name type="synonym">Mosquito iridescent virus</name>
    <dbReference type="NCBI Taxonomy" id="345201"/>
    <lineage>
        <taxon>Viruses</taxon>
        <taxon>Varidnaviria</taxon>
        <taxon>Bamfordvirae</taxon>
        <taxon>Nucleocytoviricota</taxon>
        <taxon>Megaviricetes</taxon>
        <taxon>Pimascovirales</taxon>
        <taxon>Iridoviridae</taxon>
        <taxon>Betairidovirinae</taxon>
        <taxon>Chloriridovirus</taxon>
    </lineage>
</organism>
<evidence type="ECO:0000255" key="1"/>